<protein>
    <recommendedName>
        <fullName evidence="6">Pectinesterase</fullName>
        <ecNumber evidence="3">3.1.1.11</ecNumber>
    </recommendedName>
    <alternativeName>
        <fullName evidence="5">Pectin methylesterase</fullName>
    </alternativeName>
</protein>
<feature type="signal peptide" evidence="7">
    <location>
        <begin position="1"/>
        <end position="16"/>
    </location>
</feature>
<feature type="chain" id="PRO_0000449247" description="Pectinesterase">
    <location>
        <begin position="17"/>
        <end position="382"/>
    </location>
</feature>
<feature type="active site" description="Proton donor" evidence="1">
    <location>
        <position position="216"/>
    </location>
</feature>
<feature type="active site" description="Nucleophile" evidence="1">
    <location>
        <position position="242"/>
    </location>
</feature>
<feature type="binding site" evidence="1">
    <location>
        <position position="193"/>
    </location>
    <ligand>
        <name>substrate</name>
    </ligand>
</feature>
<feature type="binding site" evidence="1">
    <location>
        <position position="306"/>
    </location>
    <ligand>
        <name>substrate</name>
    </ligand>
</feature>
<feature type="binding site" evidence="1">
    <location>
        <position position="308"/>
    </location>
    <ligand>
        <name>substrate</name>
    </ligand>
</feature>
<feature type="site" description="Transition state stabilizer" evidence="1">
    <location>
        <position position="215"/>
    </location>
</feature>
<feature type="glycosylation site" description="N-linked (GlcNAc...) asparagine" evidence="2">
    <location>
        <position position="179"/>
    </location>
</feature>
<feature type="glycosylation site" description="N-linked (GlcNAc...) asparagine" evidence="2">
    <location>
        <position position="340"/>
    </location>
</feature>
<feature type="glycosylation site" description="N-linked (GlcNAc...) asparagine" evidence="2">
    <location>
        <position position="376"/>
    </location>
</feature>
<feature type="disulfide bond" evidence="4 10">
    <location>
        <begin position="153"/>
        <end position="164"/>
    </location>
</feature>
<feature type="sequence conflict" description="In Ref. 1; AAW28928." evidence="6" ref="1">
    <original>T</original>
    <variation>A</variation>
    <location>
        <position position="77"/>
    </location>
</feature>
<feature type="sequence conflict" description="In Ref. 1; AAW28928." evidence="6" ref="1">
    <original>CASKSGT</original>
    <variation>WRSKSGA</variation>
    <location>
        <begin position="153"/>
        <end position="159"/>
    </location>
</feature>
<feature type="sequence conflict" description="In Ref. 1; AAW28928." evidence="6" ref="1">
    <original>V</original>
    <variation>G</variation>
    <location>
        <position position="170"/>
    </location>
</feature>
<feature type="sequence conflict" description="In Ref. 1; AAW28928." evidence="6" ref="1">
    <original>H</original>
    <variation>Y</variation>
    <location>
        <position position="214"/>
    </location>
</feature>
<feature type="sequence conflict" description="In Ref. 1; AAW28928." evidence="6" ref="1">
    <original>A</original>
    <variation>S</variation>
    <location>
        <position position="268"/>
    </location>
</feature>
<feature type="sequence conflict" description="In Ref. 1; AAW28928." evidence="6" ref="1">
    <original>G</original>
    <variation>A</variation>
    <location>
        <position position="311"/>
    </location>
</feature>
<feature type="strand" evidence="11">
    <location>
        <begin position="20"/>
        <end position="23"/>
    </location>
</feature>
<feature type="strand" evidence="11">
    <location>
        <begin position="26"/>
        <end position="28"/>
    </location>
</feature>
<feature type="helix" evidence="11">
    <location>
        <begin position="31"/>
        <end position="34"/>
    </location>
</feature>
<feature type="helix" evidence="11">
    <location>
        <begin position="39"/>
        <end position="43"/>
    </location>
</feature>
<feature type="strand" evidence="11">
    <location>
        <begin position="57"/>
        <end position="60"/>
    </location>
</feature>
<feature type="turn" evidence="11">
    <location>
        <begin position="61"/>
        <end position="63"/>
    </location>
</feature>
<feature type="strand" evidence="11">
    <location>
        <begin position="64"/>
        <end position="66"/>
    </location>
</feature>
<feature type="helix" evidence="11">
    <location>
        <begin position="67"/>
        <end position="77"/>
    </location>
</feature>
<feature type="strand" evidence="11">
    <location>
        <begin position="83"/>
        <end position="87"/>
    </location>
</feature>
<feature type="strand" evidence="11">
    <location>
        <begin position="89"/>
        <end position="92"/>
    </location>
</feature>
<feature type="strand" evidence="11">
    <location>
        <begin position="96"/>
        <end position="98"/>
    </location>
</feature>
<feature type="strand" evidence="11">
    <location>
        <begin position="105"/>
        <end position="109"/>
    </location>
</feature>
<feature type="strand" evidence="11">
    <location>
        <begin position="111"/>
        <end position="113"/>
    </location>
</feature>
<feature type="helix" evidence="11">
    <location>
        <begin position="114"/>
        <end position="116"/>
    </location>
</feature>
<feature type="strand" evidence="11">
    <location>
        <begin position="117"/>
        <end position="121"/>
    </location>
</feature>
<feature type="helix" evidence="11">
    <location>
        <begin position="129"/>
        <end position="136"/>
    </location>
</feature>
<feature type="helix" evidence="11">
    <location>
        <begin position="137"/>
        <end position="139"/>
    </location>
</feature>
<feature type="helix" evidence="11">
    <location>
        <begin position="147"/>
        <end position="154"/>
    </location>
</feature>
<feature type="helix" evidence="11">
    <location>
        <begin position="161"/>
        <end position="164"/>
    </location>
</feature>
<feature type="strand" evidence="11">
    <location>
        <begin position="167"/>
        <end position="170"/>
    </location>
</feature>
<feature type="strand" evidence="11">
    <location>
        <begin position="176"/>
        <end position="179"/>
    </location>
</feature>
<feature type="strand" evidence="11">
    <location>
        <begin position="181"/>
        <end position="184"/>
    </location>
</feature>
<feature type="strand" evidence="11">
    <location>
        <begin position="196"/>
        <end position="199"/>
    </location>
</feature>
<feature type="strand" evidence="11">
    <location>
        <begin position="201"/>
        <end position="208"/>
    </location>
</feature>
<feature type="strand" evidence="11">
    <location>
        <begin position="210"/>
        <end position="212"/>
    </location>
</feature>
<feature type="strand" evidence="11">
    <location>
        <begin position="214"/>
        <end position="216"/>
    </location>
</feature>
<feature type="strand" evidence="11">
    <location>
        <begin position="218"/>
        <end position="220"/>
    </location>
</feature>
<feature type="strand" evidence="11">
    <location>
        <begin position="229"/>
        <end position="234"/>
    </location>
</feature>
<feature type="strand" evidence="11">
    <location>
        <begin position="236"/>
        <end position="254"/>
    </location>
</feature>
<feature type="strand" evidence="11">
    <location>
        <begin position="256"/>
        <end position="259"/>
    </location>
</feature>
<feature type="strand" evidence="11">
    <location>
        <begin position="268"/>
        <end position="273"/>
    </location>
</feature>
<feature type="strand" evidence="11">
    <location>
        <begin position="283"/>
        <end position="287"/>
    </location>
</feature>
<feature type="strand" evidence="11">
    <location>
        <begin position="289"/>
        <end position="292"/>
    </location>
</feature>
<feature type="helix" evidence="11">
    <location>
        <begin position="294"/>
        <end position="299"/>
    </location>
</feature>
<feature type="strand" evidence="11">
    <location>
        <begin position="302"/>
        <end position="305"/>
    </location>
</feature>
<feature type="helix" evidence="11">
    <location>
        <begin position="315"/>
        <end position="317"/>
    </location>
</feature>
<feature type="turn" evidence="11">
    <location>
        <begin position="320"/>
        <end position="322"/>
    </location>
</feature>
<feature type="strand" evidence="11">
    <location>
        <begin position="327"/>
        <end position="332"/>
    </location>
</feature>
<feature type="strand" evidence="11">
    <location>
        <begin position="371"/>
        <end position="376"/>
    </location>
</feature>
<name>PME_SITOR</name>
<reference evidence="8" key="1">
    <citation type="journal article" date="2005" name="J. Insect Sci.">
        <title>Pectinmethylesterase from the rice weevil, Sitophilus oryzae: cDNA isolation and sequencing, genetic origin, and expression of the recombinant enzyme.</title>
        <authorList>
            <person name="Shen Z."/>
            <person name="Pappan K."/>
            <person name="Mutti N.S."/>
            <person name="He Q.J."/>
            <person name="Denton M."/>
            <person name="Zhang Y."/>
            <person name="Kanost M.R."/>
            <person name="Reese J.C."/>
            <person name="Reeck G.R."/>
        </authorList>
    </citation>
    <scope>NUCLEOTIDE SEQUENCE [MRNA]</scope>
    <scope>PROTEIN SEQUENCE OF 18-25</scope>
    <scope>CATALYTIC ACTIVITY</scope>
    <scope>PATHWAY</scope>
    <scope>TISSUE SPECIFICITY</scope>
</reference>
<reference evidence="9" key="2">
    <citation type="journal article" date="2010" name="PLoS ONE">
        <title>Diversity of beetle genes encoding novel plant cell wall degrading enzymes.</title>
        <authorList>
            <person name="Pauchet Y."/>
            <person name="Wilkinson P."/>
            <person name="Chauhan R."/>
            <person name="Ffrench-Constant R.H."/>
        </authorList>
    </citation>
    <scope>NUCLEOTIDE SEQUENCE [MRNA]</scope>
    <source>
        <tissue evidence="9">Midgut</tissue>
    </source>
</reference>
<reference evidence="10" key="3">
    <citation type="journal article" date="2014" name="Acta Crystallogr. F Struct. Biol. Commun.">
        <title>The structure of rice weevil pectin methylesterase.</title>
        <authorList>
            <person name="Teller D.C."/>
            <person name="Behnke C.A."/>
            <person name="Pappan K."/>
            <person name="Shen Z."/>
            <person name="Reese J.C."/>
            <person name="Reeck G.R."/>
            <person name="Stenkamp R.E."/>
        </authorList>
    </citation>
    <scope>X-RAY CRYSTALLOGRAPHY (1.79 ANGSTROMS) OF 17-382</scope>
    <scope>DISULFIDE BOND</scope>
</reference>
<proteinExistence type="evidence at protein level"/>
<comment type="function">
    <text evidence="7">Pectinesterase which probably plays an important role in the digestion of plant cell walls.</text>
</comment>
<comment type="catalytic activity">
    <reaction evidence="3">
        <text>[(1-&gt;4)-alpha-D-galacturonosyl methyl ester](n) + n H2O = [(1-&gt;4)-alpha-D-galacturonosyl](n) + n methanol + n H(+)</text>
        <dbReference type="Rhea" id="RHEA:22380"/>
        <dbReference type="Rhea" id="RHEA-COMP:14570"/>
        <dbReference type="Rhea" id="RHEA-COMP:14573"/>
        <dbReference type="ChEBI" id="CHEBI:15377"/>
        <dbReference type="ChEBI" id="CHEBI:15378"/>
        <dbReference type="ChEBI" id="CHEBI:17790"/>
        <dbReference type="ChEBI" id="CHEBI:140522"/>
        <dbReference type="ChEBI" id="CHEBI:140523"/>
        <dbReference type="EC" id="3.1.1.11"/>
    </reaction>
</comment>
<comment type="pathway">
    <text evidence="3">Glycan metabolism; pectin degradation; 2-dehydro-3-deoxy-D-gluconate from pectin: step 1/5.</text>
</comment>
<comment type="subcellular location">
    <subcellularLocation>
        <location evidence="6">Secreted</location>
    </subcellularLocation>
</comment>
<comment type="tissue specificity">
    <text evidence="3">Expressed throughout the midgut with particularly strong expression in the ventriculus.</text>
</comment>
<comment type="miscellaneous">
    <text evidence="6">May originate from horizontal gene transfer of a bacterial enzyme to an ancentral weevil genome.</text>
</comment>
<comment type="similarity">
    <text evidence="6">Belongs to the pectinesterase family.</text>
</comment>
<organism evidence="9">
    <name type="scientific">Sitophilus oryzae</name>
    <name type="common">Rice weevil</name>
    <name type="synonym">Curculio oryzae</name>
    <dbReference type="NCBI Taxonomy" id="7048"/>
    <lineage>
        <taxon>Eukaryota</taxon>
        <taxon>Metazoa</taxon>
        <taxon>Ecdysozoa</taxon>
        <taxon>Arthropoda</taxon>
        <taxon>Hexapoda</taxon>
        <taxon>Insecta</taxon>
        <taxon>Pterygota</taxon>
        <taxon>Neoptera</taxon>
        <taxon>Endopterygota</taxon>
        <taxon>Coleoptera</taxon>
        <taxon>Polyphaga</taxon>
        <taxon>Cucujiformia</taxon>
        <taxon>Curculionidae</taxon>
        <taxon>Dryophthorinae</taxon>
        <taxon>Sitophilus</taxon>
    </lineage>
</organism>
<accession>E7CIP7</accession>
<accession>Q5MB09</accession>
<sequence>MKIIVLLLLAVVLASADQTAPGTASRPILTASESNYFTTATYLQGWSPPSISTSKADYTVGNGYNTIQAAVNAAINTGGTTRKYIKINAGTYQEVVYIPNTKVPLTIYGGGSSPSDTLITLNMPAQTTPSAYKSLVGSLFNSADPAYSMYNSCASKSGTIGTSCSTVFWVKAPAVQIVNLSIENSAKNTGDQQAVALQTNSDQIQIHNARLLGHQDTLYAGSGSSSVERSYYTNTYIEGDIDFVFGGGSAIFESCTFYVKADRRSDTAVVFAPDTDPHKMYGYFVYKSTITGDSAWSSSKKAYLGRAWDSGVSSSSAYVPGTSPNGQLIIKESTIDGIINTSGPWTTATSGRTYSGNNANSRDLNNDNYNRFWEYNNSGNGA</sequence>
<evidence type="ECO:0000250" key="1">
    <source>
        <dbReference type="UniProtKB" id="P0C1A9"/>
    </source>
</evidence>
<evidence type="ECO:0000255" key="2">
    <source>
        <dbReference type="PROSITE-ProRule" id="PRU00498"/>
    </source>
</evidence>
<evidence type="ECO:0000269" key="3">
    <source>
    </source>
</evidence>
<evidence type="ECO:0000269" key="4">
    <source>
    </source>
</evidence>
<evidence type="ECO:0000303" key="5">
    <source>
    </source>
</evidence>
<evidence type="ECO:0000305" key="6"/>
<evidence type="ECO:0000305" key="7">
    <source>
    </source>
</evidence>
<evidence type="ECO:0000312" key="8">
    <source>
        <dbReference type="EMBL" id="AAW28928.1"/>
    </source>
</evidence>
<evidence type="ECO:0000312" key="9">
    <source>
        <dbReference type="EMBL" id="ADU33259.1"/>
    </source>
</evidence>
<evidence type="ECO:0007744" key="10">
    <source>
        <dbReference type="PDB" id="4PMH"/>
    </source>
</evidence>
<evidence type="ECO:0007829" key="11">
    <source>
        <dbReference type="PDB" id="4PMH"/>
    </source>
</evidence>
<gene>
    <name evidence="9" type="primary">CE8-1</name>
</gene>
<dbReference type="EC" id="3.1.1.11" evidence="3"/>
<dbReference type="EMBL" id="AY841894">
    <property type="protein sequence ID" value="AAW28928.1"/>
    <property type="molecule type" value="mRNA"/>
</dbReference>
<dbReference type="EMBL" id="HM175754">
    <property type="protein sequence ID" value="ADU33259.1"/>
    <property type="molecule type" value="mRNA"/>
</dbReference>
<dbReference type="PDB" id="4PMH">
    <property type="method" value="X-ray"/>
    <property type="resolution" value="1.79 A"/>
    <property type="chains" value="A=17-382"/>
</dbReference>
<dbReference type="PDBsum" id="4PMH"/>
<dbReference type="SMR" id="E7CIP7"/>
<dbReference type="GlyCosmos" id="E7CIP7">
    <property type="glycosylation" value="3 sites, No reported glycans"/>
</dbReference>
<dbReference type="EnsemblMetazoa" id="XM_030892193.1">
    <property type="protein sequence ID" value="XP_030748053.1"/>
    <property type="gene ID" value="LOC115876414"/>
</dbReference>
<dbReference type="InParanoid" id="E7CIP7"/>
<dbReference type="OrthoDB" id="2019149at2759"/>
<dbReference type="UniPathway" id="UPA00545">
    <property type="reaction ID" value="UER00823"/>
</dbReference>
<dbReference type="EvolutionaryTrace" id="E7CIP7"/>
<dbReference type="Proteomes" id="UP000504635">
    <property type="component" value="Unplaced"/>
</dbReference>
<dbReference type="GO" id="GO:0005615">
    <property type="term" value="C:extracellular space"/>
    <property type="evidence" value="ECO:0000305"/>
    <property type="project" value="UniProtKB"/>
</dbReference>
<dbReference type="GO" id="GO:0030599">
    <property type="term" value="F:pectinesterase activity"/>
    <property type="evidence" value="ECO:0000314"/>
    <property type="project" value="UniProtKB"/>
</dbReference>
<dbReference type="GO" id="GO:0042545">
    <property type="term" value="P:cell wall modification"/>
    <property type="evidence" value="ECO:0007669"/>
    <property type="project" value="InterPro"/>
</dbReference>
<dbReference type="GO" id="GO:0045490">
    <property type="term" value="P:pectin catabolic process"/>
    <property type="evidence" value="ECO:0000314"/>
    <property type="project" value="UniProtKB"/>
</dbReference>
<dbReference type="Gene3D" id="2.160.20.10">
    <property type="entry name" value="Single-stranded right-handed beta-helix, Pectin lyase-like"/>
    <property type="match status" value="1"/>
</dbReference>
<dbReference type="InterPro" id="IPR012334">
    <property type="entry name" value="Pectin_lyas_fold"/>
</dbReference>
<dbReference type="InterPro" id="IPR011050">
    <property type="entry name" value="Pectin_lyase_fold/virulence"/>
</dbReference>
<dbReference type="InterPro" id="IPR033131">
    <property type="entry name" value="Pectinesterase_Asp_AS"/>
</dbReference>
<dbReference type="InterPro" id="IPR000070">
    <property type="entry name" value="Pectinesterase_cat"/>
</dbReference>
<dbReference type="PANTHER" id="PTHR31321">
    <property type="entry name" value="ACYL-COA THIOESTER HYDROLASE YBHC-RELATED"/>
    <property type="match status" value="1"/>
</dbReference>
<dbReference type="PANTHER" id="PTHR31321:SF57">
    <property type="entry name" value="PECTINESTERASE 53-RELATED"/>
    <property type="match status" value="1"/>
</dbReference>
<dbReference type="Pfam" id="PF01095">
    <property type="entry name" value="Pectinesterase"/>
    <property type="match status" value="1"/>
</dbReference>
<dbReference type="SUPFAM" id="SSF51126">
    <property type="entry name" value="Pectin lyase-like"/>
    <property type="match status" value="1"/>
</dbReference>
<dbReference type="PROSITE" id="PS00503">
    <property type="entry name" value="PECTINESTERASE_2"/>
    <property type="match status" value="1"/>
</dbReference>
<keyword id="KW-0002">3D-structure</keyword>
<keyword id="KW-0063">Aspartyl esterase</keyword>
<keyword id="KW-0903">Direct protein sequencing</keyword>
<keyword id="KW-1015">Disulfide bond</keyword>
<keyword id="KW-0325">Glycoprotein</keyword>
<keyword id="KW-0378">Hydrolase</keyword>
<keyword id="KW-1185">Reference proteome</keyword>
<keyword id="KW-0964">Secreted</keyword>
<keyword id="KW-0732">Signal</keyword>